<sequence>MMAPQTTRNDPRQRGQEAEERARAYLEGQGLQTLARNFRTRRGEIDLIMADGGVTVFVEVRRRSHPGYGGATASVDRRKRQRLSRAASAWLARHPGWARFDVVATDGHEVHWVRDAFREES</sequence>
<dbReference type="EMBL" id="CP000544">
    <property type="protein sequence ID" value="ABM62867.1"/>
    <property type="molecule type" value="Genomic_DNA"/>
</dbReference>
<dbReference type="RefSeq" id="WP_011814889.1">
    <property type="nucleotide sequence ID" value="NC_008789.1"/>
</dbReference>
<dbReference type="SMR" id="A1WYV5"/>
<dbReference type="STRING" id="349124.Hhal_2103"/>
<dbReference type="KEGG" id="hha:Hhal_2103"/>
<dbReference type="eggNOG" id="COG0792">
    <property type="taxonomic scope" value="Bacteria"/>
</dbReference>
<dbReference type="HOGENOM" id="CLU_115353_1_0_6"/>
<dbReference type="OrthoDB" id="9794876at2"/>
<dbReference type="Proteomes" id="UP000000647">
    <property type="component" value="Chromosome"/>
</dbReference>
<dbReference type="GO" id="GO:0003676">
    <property type="term" value="F:nucleic acid binding"/>
    <property type="evidence" value="ECO:0007669"/>
    <property type="project" value="InterPro"/>
</dbReference>
<dbReference type="Gene3D" id="3.40.1350.10">
    <property type="match status" value="1"/>
</dbReference>
<dbReference type="HAMAP" id="MF_00048">
    <property type="entry name" value="UPF0102"/>
    <property type="match status" value="1"/>
</dbReference>
<dbReference type="InterPro" id="IPR011335">
    <property type="entry name" value="Restrct_endonuc-II-like"/>
</dbReference>
<dbReference type="InterPro" id="IPR011856">
    <property type="entry name" value="tRNA_endonuc-like_dom_sf"/>
</dbReference>
<dbReference type="InterPro" id="IPR003509">
    <property type="entry name" value="UPF0102_YraN-like"/>
</dbReference>
<dbReference type="NCBIfam" id="NF009150">
    <property type="entry name" value="PRK12497.1-3"/>
    <property type="match status" value="1"/>
</dbReference>
<dbReference type="NCBIfam" id="TIGR00252">
    <property type="entry name" value="YraN family protein"/>
    <property type="match status" value="1"/>
</dbReference>
<dbReference type="PANTHER" id="PTHR34039">
    <property type="entry name" value="UPF0102 PROTEIN YRAN"/>
    <property type="match status" value="1"/>
</dbReference>
<dbReference type="PANTHER" id="PTHR34039:SF1">
    <property type="entry name" value="UPF0102 PROTEIN YRAN"/>
    <property type="match status" value="1"/>
</dbReference>
<dbReference type="Pfam" id="PF02021">
    <property type="entry name" value="UPF0102"/>
    <property type="match status" value="1"/>
</dbReference>
<dbReference type="SUPFAM" id="SSF52980">
    <property type="entry name" value="Restriction endonuclease-like"/>
    <property type="match status" value="1"/>
</dbReference>
<accession>A1WYV5</accession>
<keyword id="KW-1185">Reference proteome</keyword>
<comment type="similarity">
    <text evidence="1">Belongs to the UPF0102 family.</text>
</comment>
<name>Y2103_HALHL</name>
<feature type="chain" id="PRO_0000336187" description="UPF0102 protein Hhal_2103">
    <location>
        <begin position="1"/>
        <end position="121"/>
    </location>
</feature>
<feature type="region of interest" description="Disordered" evidence="2">
    <location>
        <begin position="1"/>
        <end position="20"/>
    </location>
</feature>
<feature type="compositionally biased region" description="Basic and acidic residues" evidence="2">
    <location>
        <begin position="9"/>
        <end position="20"/>
    </location>
</feature>
<reference key="1">
    <citation type="submission" date="2006-12" db="EMBL/GenBank/DDBJ databases">
        <title>Complete sequence of Halorhodospira halophila SL1.</title>
        <authorList>
            <consortium name="US DOE Joint Genome Institute"/>
            <person name="Copeland A."/>
            <person name="Lucas S."/>
            <person name="Lapidus A."/>
            <person name="Barry K."/>
            <person name="Detter J.C."/>
            <person name="Glavina del Rio T."/>
            <person name="Hammon N."/>
            <person name="Israni S."/>
            <person name="Dalin E."/>
            <person name="Tice H."/>
            <person name="Pitluck S."/>
            <person name="Saunders E."/>
            <person name="Brettin T."/>
            <person name="Bruce D."/>
            <person name="Han C."/>
            <person name="Tapia R."/>
            <person name="Schmutz J."/>
            <person name="Larimer F."/>
            <person name="Land M."/>
            <person name="Hauser L."/>
            <person name="Kyrpides N."/>
            <person name="Mikhailova N."/>
            <person name="Hoff W."/>
            <person name="Richardson P."/>
        </authorList>
    </citation>
    <scope>NUCLEOTIDE SEQUENCE [LARGE SCALE GENOMIC DNA]</scope>
    <source>
        <strain>DSM 244 / SL1</strain>
    </source>
</reference>
<organism>
    <name type="scientific">Halorhodospira halophila (strain DSM 244 / SL1)</name>
    <name type="common">Ectothiorhodospira halophila (strain DSM 244 / SL1)</name>
    <dbReference type="NCBI Taxonomy" id="349124"/>
    <lineage>
        <taxon>Bacteria</taxon>
        <taxon>Pseudomonadati</taxon>
        <taxon>Pseudomonadota</taxon>
        <taxon>Gammaproteobacteria</taxon>
        <taxon>Chromatiales</taxon>
        <taxon>Ectothiorhodospiraceae</taxon>
        <taxon>Halorhodospira</taxon>
    </lineage>
</organism>
<proteinExistence type="inferred from homology"/>
<evidence type="ECO:0000255" key="1">
    <source>
        <dbReference type="HAMAP-Rule" id="MF_00048"/>
    </source>
</evidence>
<evidence type="ECO:0000256" key="2">
    <source>
        <dbReference type="SAM" id="MobiDB-lite"/>
    </source>
</evidence>
<gene>
    <name type="ordered locus">Hhal_2103</name>
</gene>
<protein>
    <recommendedName>
        <fullName evidence="1">UPF0102 protein Hhal_2103</fullName>
    </recommendedName>
</protein>